<gene>
    <name evidence="1" type="primary">pdxH</name>
    <name type="ordered locus">Mmcs_4458</name>
</gene>
<dbReference type="EC" id="1.4.3.5" evidence="1"/>
<dbReference type="EMBL" id="CP000384">
    <property type="protein sequence ID" value="ABG10562.1"/>
    <property type="molecule type" value="Genomic_DNA"/>
</dbReference>
<dbReference type="SMR" id="Q1B3H2"/>
<dbReference type="KEGG" id="mmc:Mmcs_4458"/>
<dbReference type="HOGENOM" id="CLU_032263_2_2_11"/>
<dbReference type="BioCyc" id="MSP164756:G1G6O-4555-MONOMER"/>
<dbReference type="UniPathway" id="UPA01068">
    <property type="reaction ID" value="UER00304"/>
</dbReference>
<dbReference type="UniPathway" id="UPA01068">
    <property type="reaction ID" value="UER00305"/>
</dbReference>
<dbReference type="GO" id="GO:0010181">
    <property type="term" value="F:FMN binding"/>
    <property type="evidence" value="ECO:0007669"/>
    <property type="project" value="UniProtKB-UniRule"/>
</dbReference>
<dbReference type="GO" id="GO:0004733">
    <property type="term" value="F:pyridoxamine phosphate oxidase activity"/>
    <property type="evidence" value="ECO:0007669"/>
    <property type="project" value="UniProtKB-UniRule"/>
</dbReference>
<dbReference type="GO" id="GO:0008615">
    <property type="term" value="P:pyridoxine biosynthetic process"/>
    <property type="evidence" value="ECO:0007669"/>
    <property type="project" value="UniProtKB-KW"/>
</dbReference>
<dbReference type="Gene3D" id="2.30.110.10">
    <property type="entry name" value="Electron Transport, Fmn-binding Protein, Chain A"/>
    <property type="match status" value="1"/>
</dbReference>
<dbReference type="HAMAP" id="MF_01629">
    <property type="entry name" value="PdxH"/>
    <property type="match status" value="1"/>
</dbReference>
<dbReference type="InterPro" id="IPR000659">
    <property type="entry name" value="Pyridox_Oxase"/>
</dbReference>
<dbReference type="InterPro" id="IPR019740">
    <property type="entry name" value="Pyridox_Oxase_CS"/>
</dbReference>
<dbReference type="InterPro" id="IPR011576">
    <property type="entry name" value="Pyridox_Oxase_N"/>
</dbReference>
<dbReference type="InterPro" id="IPR019576">
    <property type="entry name" value="Pyridoxamine_oxidase_dimer_C"/>
</dbReference>
<dbReference type="InterPro" id="IPR012349">
    <property type="entry name" value="Split_barrel_FMN-bd"/>
</dbReference>
<dbReference type="NCBIfam" id="TIGR00558">
    <property type="entry name" value="pdxH"/>
    <property type="match status" value="1"/>
</dbReference>
<dbReference type="NCBIfam" id="NF004231">
    <property type="entry name" value="PRK05679.1"/>
    <property type="match status" value="1"/>
</dbReference>
<dbReference type="PANTHER" id="PTHR10851:SF0">
    <property type="entry name" value="PYRIDOXINE-5'-PHOSPHATE OXIDASE"/>
    <property type="match status" value="1"/>
</dbReference>
<dbReference type="PANTHER" id="PTHR10851">
    <property type="entry name" value="PYRIDOXINE-5-PHOSPHATE OXIDASE"/>
    <property type="match status" value="1"/>
</dbReference>
<dbReference type="Pfam" id="PF10590">
    <property type="entry name" value="PNP_phzG_C"/>
    <property type="match status" value="1"/>
</dbReference>
<dbReference type="Pfam" id="PF01243">
    <property type="entry name" value="PNPOx_N"/>
    <property type="match status" value="1"/>
</dbReference>
<dbReference type="PIRSF" id="PIRSF000190">
    <property type="entry name" value="Pyd_amn-ph_oxd"/>
    <property type="match status" value="1"/>
</dbReference>
<dbReference type="SUPFAM" id="SSF50475">
    <property type="entry name" value="FMN-binding split barrel"/>
    <property type="match status" value="1"/>
</dbReference>
<dbReference type="PROSITE" id="PS01064">
    <property type="entry name" value="PYRIDOX_OXIDASE"/>
    <property type="match status" value="1"/>
</dbReference>
<feature type="chain" id="PRO_0000292308" description="Pyridoxine/pyridoxamine 5'-phosphate oxidase">
    <location>
        <begin position="1"/>
        <end position="220"/>
    </location>
</feature>
<feature type="binding site" evidence="1">
    <location>
        <begin position="13"/>
        <end position="16"/>
    </location>
    <ligand>
        <name>substrate</name>
    </ligand>
</feature>
<feature type="binding site" evidence="1">
    <location>
        <begin position="72"/>
        <end position="77"/>
    </location>
    <ligand>
        <name>FMN</name>
        <dbReference type="ChEBI" id="CHEBI:58210"/>
    </ligand>
</feature>
<feature type="binding site" evidence="1">
    <location>
        <position position="77"/>
    </location>
    <ligand>
        <name>substrate</name>
    </ligand>
</feature>
<feature type="binding site" evidence="1">
    <location>
        <begin position="87"/>
        <end position="88"/>
    </location>
    <ligand>
        <name>FMN</name>
        <dbReference type="ChEBI" id="CHEBI:58210"/>
    </ligand>
</feature>
<feature type="binding site" evidence="1">
    <location>
        <position position="94"/>
    </location>
    <ligand>
        <name>FMN</name>
        <dbReference type="ChEBI" id="CHEBI:58210"/>
    </ligand>
</feature>
<feature type="binding site" evidence="1">
    <location>
        <position position="116"/>
    </location>
    <ligand>
        <name>FMN</name>
        <dbReference type="ChEBI" id="CHEBI:58210"/>
    </ligand>
</feature>
<feature type="binding site" evidence="1">
    <location>
        <position position="134"/>
    </location>
    <ligand>
        <name>substrate</name>
    </ligand>
</feature>
<feature type="binding site" evidence="1">
    <location>
        <position position="138"/>
    </location>
    <ligand>
        <name>substrate</name>
    </ligand>
</feature>
<feature type="binding site" evidence="1">
    <location>
        <position position="142"/>
    </location>
    <ligand>
        <name>substrate</name>
    </ligand>
</feature>
<feature type="binding site" evidence="1">
    <location>
        <begin position="151"/>
        <end position="152"/>
    </location>
    <ligand>
        <name>FMN</name>
        <dbReference type="ChEBI" id="CHEBI:58210"/>
    </ligand>
</feature>
<feature type="binding site" evidence="1">
    <location>
        <position position="197"/>
    </location>
    <ligand>
        <name>FMN</name>
        <dbReference type="ChEBI" id="CHEBI:58210"/>
    </ligand>
</feature>
<feature type="binding site" evidence="1">
    <location>
        <begin position="203"/>
        <end position="205"/>
    </location>
    <ligand>
        <name>substrate</name>
    </ligand>
</feature>
<feature type="binding site" evidence="1">
    <location>
        <position position="207"/>
    </location>
    <ligand>
        <name>FMN</name>
        <dbReference type="ChEBI" id="CHEBI:58210"/>
    </ligand>
</feature>
<evidence type="ECO:0000255" key="1">
    <source>
        <dbReference type="HAMAP-Rule" id="MF_01629"/>
    </source>
</evidence>
<comment type="function">
    <text evidence="1">Catalyzes the oxidation of either pyridoxine 5'-phosphate (PNP) or pyridoxamine 5'-phosphate (PMP) into pyridoxal 5'-phosphate (PLP).</text>
</comment>
<comment type="catalytic activity">
    <reaction evidence="1">
        <text>pyridoxamine 5'-phosphate + O2 + H2O = pyridoxal 5'-phosphate + H2O2 + NH4(+)</text>
        <dbReference type="Rhea" id="RHEA:15817"/>
        <dbReference type="ChEBI" id="CHEBI:15377"/>
        <dbReference type="ChEBI" id="CHEBI:15379"/>
        <dbReference type="ChEBI" id="CHEBI:16240"/>
        <dbReference type="ChEBI" id="CHEBI:28938"/>
        <dbReference type="ChEBI" id="CHEBI:58451"/>
        <dbReference type="ChEBI" id="CHEBI:597326"/>
        <dbReference type="EC" id="1.4.3.5"/>
    </reaction>
</comment>
<comment type="catalytic activity">
    <reaction evidence="1">
        <text>pyridoxine 5'-phosphate + O2 = pyridoxal 5'-phosphate + H2O2</text>
        <dbReference type="Rhea" id="RHEA:15149"/>
        <dbReference type="ChEBI" id="CHEBI:15379"/>
        <dbReference type="ChEBI" id="CHEBI:16240"/>
        <dbReference type="ChEBI" id="CHEBI:58589"/>
        <dbReference type="ChEBI" id="CHEBI:597326"/>
        <dbReference type="EC" id="1.4.3.5"/>
    </reaction>
</comment>
<comment type="cofactor">
    <cofactor evidence="1">
        <name>FMN</name>
        <dbReference type="ChEBI" id="CHEBI:58210"/>
    </cofactor>
    <text evidence="1">Binds 1 FMN per subunit.</text>
</comment>
<comment type="pathway">
    <text evidence="1">Cofactor metabolism; pyridoxal 5'-phosphate salvage; pyridoxal 5'-phosphate from pyridoxamine 5'-phosphate: step 1/1.</text>
</comment>
<comment type="pathway">
    <text evidence="1">Cofactor metabolism; pyridoxal 5'-phosphate salvage; pyridoxal 5'-phosphate from pyridoxine 5'-phosphate: step 1/1.</text>
</comment>
<comment type="subunit">
    <text evidence="1">Homodimer.</text>
</comment>
<comment type="similarity">
    <text evidence="1">Belongs to the pyridoxamine 5'-phosphate oxidase family.</text>
</comment>
<name>PDXH_MYCSS</name>
<keyword id="KW-0285">Flavoprotein</keyword>
<keyword id="KW-0288">FMN</keyword>
<keyword id="KW-0560">Oxidoreductase</keyword>
<keyword id="KW-0664">Pyridoxine biosynthesis</keyword>
<accession>Q1B3H2</accession>
<sequence>MKKADNEHLARMRVEYGSVEKDGSADLDVDWLADGWVALLRRWLADAEAAGIAEPNAIVLGTVDAGGRPVTRTVLCKSVDDTGITFFTNYGSAKGEDLASTPYASATFPWFALGRQVHVRGPVTKVSAEETADYWSKRPRGSQLGAWASQQSRPIASRAELLDQLAEVTERFADHDTVPVPPDWGGYRITAEVVEFWQGRESRVHNRIRVHDGRIERLQP</sequence>
<organism>
    <name type="scientific">Mycobacterium sp. (strain MCS)</name>
    <dbReference type="NCBI Taxonomy" id="164756"/>
    <lineage>
        <taxon>Bacteria</taxon>
        <taxon>Bacillati</taxon>
        <taxon>Actinomycetota</taxon>
        <taxon>Actinomycetes</taxon>
        <taxon>Mycobacteriales</taxon>
        <taxon>Mycobacteriaceae</taxon>
        <taxon>Mycobacterium</taxon>
    </lineage>
</organism>
<reference key="1">
    <citation type="submission" date="2006-06" db="EMBL/GenBank/DDBJ databases">
        <title>Complete sequence of chromosome of Mycobacterium sp. MCS.</title>
        <authorList>
            <consortium name="US DOE Joint Genome Institute"/>
            <person name="Copeland A."/>
            <person name="Lucas S."/>
            <person name="Lapidus A."/>
            <person name="Barry K."/>
            <person name="Detter J.C."/>
            <person name="Glavina del Rio T."/>
            <person name="Hammon N."/>
            <person name="Israni S."/>
            <person name="Dalin E."/>
            <person name="Tice H."/>
            <person name="Pitluck S."/>
            <person name="Martinez M."/>
            <person name="Schmutz J."/>
            <person name="Larimer F."/>
            <person name="Land M."/>
            <person name="Hauser L."/>
            <person name="Kyrpides N."/>
            <person name="Kim E."/>
            <person name="Miller C.D."/>
            <person name="Hughes J.E."/>
            <person name="Anderson A.J."/>
            <person name="Sims R.C."/>
            <person name="Richardson P."/>
        </authorList>
    </citation>
    <scope>NUCLEOTIDE SEQUENCE [LARGE SCALE GENOMIC DNA]</scope>
    <source>
        <strain>MCS</strain>
    </source>
</reference>
<protein>
    <recommendedName>
        <fullName evidence="1">Pyridoxine/pyridoxamine 5'-phosphate oxidase</fullName>
        <ecNumber evidence="1">1.4.3.5</ecNumber>
    </recommendedName>
    <alternativeName>
        <fullName evidence="1">PNP/PMP oxidase</fullName>
        <shortName evidence="1">PNPOx</shortName>
    </alternativeName>
    <alternativeName>
        <fullName evidence="1">Pyridoxal 5'-phosphate synthase</fullName>
    </alternativeName>
</protein>
<proteinExistence type="inferred from homology"/>